<sequence>MSEIRKNDHRLMQVLLAPVISEKATLVADKNEQVVFEVAPDATKQEVKAAVELLFKVEVDSVNVLVQKGKQKRFGRSMGRRKDVKKAYVCLKPGQEINFEAEAK</sequence>
<comment type="function">
    <text evidence="1">One of the early assembly proteins it binds 23S rRNA. One of the proteins that surrounds the polypeptide exit tunnel on the outside of the ribosome. Forms the main docking site for trigger factor binding to the ribosome.</text>
</comment>
<comment type="subunit">
    <text evidence="1">Part of the 50S ribosomal subunit. Contacts protein L29, and trigger factor when it is bound to the ribosome.</text>
</comment>
<comment type="similarity">
    <text evidence="1">Belongs to the universal ribosomal protein uL23 family.</text>
</comment>
<evidence type="ECO:0000255" key="1">
    <source>
        <dbReference type="HAMAP-Rule" id="MF_01369"/>
    </source>
</evidence>
<evidence type="ECO:0000305" key="2"/>
<gene>
    <name evidence="1" type="primary">rplW</name>
    <name type="ordered locus">BURPS668_3744</name>
</gene>
<proteinExistence type="inferred from homology"/>
<keyword id="KW-0687">Ribonucleoprotein</keyword>
<keyword id="KW-0689">Ribosomal protein</keyword>
<keyword id="KW-0694">RNA-binding</keyword>
<keyword id="KW-0699">rRNA-binding</keyword>
<dbReference type="EMBL" id="CP000570">
    <property type="protein sequence ID" value="ABN83705.1"/>
    <property type="molecule type" value="Genomic_DNA"/>
</dbReference>
<dbReference type="RefSeq" id="WP_004199275.1">
    <property type="nucleotide sequence ID" value="NC_009074.1"/>
</dbReference>
<dbReference type="SMR" id="A3NEH7"/>
<dbReference type="GeneID" id="98107158"/>
<dbReference type="KEGG" id="bpd:BURPS668_3744"/>
<dbReference type="HOGENOM" id="CLU_037562_3_1_4"/>
<dbReference type="GO" id="GO:1990904">
    <property type="term" value="C:ribonucleoprotein complex"/>
    <property type="evidence" value="ECO:0007669"/>
    <property type="project" value="UniProtKB-KW"/>
</dbReference>
<dbReference type="GO" id="GO:0005840">
    <property type="term" value="C:ribosome"/>
    <property type="evidence" value="ECO:0007669"/>
    <property type="project" value="UniProtKB-KW"/>
</dbReference>
<dbReference type="GO" id="GO:0019843">
    <property type="term" value="F:rRNA binding"/>
    <property type="evidence" value="ECO:0007669"/>
    <property type="project" value="UniProtKB-UniRule"/>
</dbReference>
<dbReference type="GO" id="GO:0003735">
    <property type="term" value="F:structural constituent of ribosome"/>
    <property type="evidence" value="ECO:0007669"/>
    <property type="project" value="InterPro"/>
</dbReference>
<dbReference type="GO" id="GO:0006412">
    <property type="term" value="P:translation"/>
    <property type="evidence" value="ECO:0007669"/>
    <property type="project" value="UniProtKB-UniRule"/>
</dbReference>
<dbReference type="FunFam" id="3.30.70.330:FF:000001">
    <property type="entry name" value="50S ribosomal protein L23"/>
    <property type="match status" value="1"/>
</dbReference>
<dbReference type="Gene3D" id="3.30.70.330">
    <property type="match status" value="1"/>
</dbReference>
<dbReference type="HAMAP" id="MF_01369_B">
    <property type="entry name" value="Ribosomal_uL23_B"/>
    <property type="match status" value="1"/>
</dbReference>
<dbReference type="InterPro" id="IPR012677">
    <property type="entry name" value="Nucleotide-bd_a/b_plait_sf"/>
</dbReference>
<dbReference type="InterPro" id="IPR013025">
    <property type="entry name" value="Ribosomal_uL23-like"/>
</dbReference>
<dbReference type="InterPro" id="IPR012678">
    <property type="entry name" value="Ribosomal_uL23/eL15/eS24_sf"/>
</dbReference>
<dbReference type="NCBIfam" id="NF004359">
    <property type="entry name" value="PRK05738.1-3"/>
    <property type="match status" value="1"/>
</dbReference>
<dbReference type="NCBIfam" id="NF004363">
    <property type="entry name" value="PRK05738.2-4"/>
    <property type="match status" value="1"/>
</dbReference>
<dbReference type="PANTHER" id="PTHR11620">
    <property type="entry name" value="60S RIBOSOMAL PROTEIN L23A"/>
    <property type="match status" value="1"/>
</dbReference>
<dbReference type="Pfam" id="PF00276">
    <property type="entry name" value="Ribosomal_L23"/>
    <property type="match status" value="1"/>
</dbReference>
<dbReference type="SUPFAM" id="SSF54189">
    <property type="entry name" value="Ribosomal proteins S24e, L23 and L15e"/>
    <property type="match status" value="1"/>
</dbReference>
<accession>A3NEH7</accession>
<reference key="1">
    <citation type="journal article" date="2010" name="Genome Biol. Evol.">
        <title>Continuing evolution of Burkholderia mallei through genome reduction and large-scale rearrangements.</title>
        <authorList>
            <person name="Losada L."/>
            <person name="Ronning C.M."/>
            <person name="DeShazer D."/>
            <person name="Woods D."/>
            <person name="Fedorova N."/>
            <person name="Kim H.S."/>
            <person name="Shabalina S.A."/>
            <person name="Pearson T.R."/>
            <person name="Brinkac L."/>
            <person name="Tan P."/>
            <person name="Nandi T."/>
            <person name="Crabtree J."/>
            <person name="Badger J."/>
            <person name="Beckstrom-Sternberg S."/>
            <person name="Saqib M."/>
            <person name="Schutzer S.E."/>
            <person name="Keim P."/>
            <person name="Nierman W.C."/>
        </authorList>
    </citation>
    <scope>NUCLEOTIDE SEQUENCE [LARGE SCALE GENOMIC DNA]</scope>
    <source>
        <strain>668</strain>
    </source>
</reference>
<feature type="chain" id="PRO_1000068050" description="Large ribosomal subunit protein uL23">
    <location>
        <begin position="1"/>
        <end position="104"/>
    </location>
</feature>
<protein>
    <recommendedName>
        <fullName evidence="1">Large ribosomal subunit protein uL23</fullName>
    </recommendedName>
    <alternativeName>
        <fullName evidence="2">50S ribosomal protein L23</fullName>
    </alternativeName>
</protein>
<organism>
    <name type="scientific">Burkholderia pseudomallei (strain 668)</name>
    <dbReference type="NCBI Taxonomy" id="320373"/>
    <lineage>
        <taxon>Bacteria</taxon>
        <taxon>Pseudomonadati</taxon>
        <taxon>Pseudomonadota</taxon>
        <taxon>Betaproteobacteria</taxon>
        <taxon>Burkholderiales</taxon>
        <taxon>Burkholderiaceae</taxon>
        <taxon>Burkholderia</taxon>
        <taxon>pseudomallei group</taxon>
    </lineage>
</organism>
<name>RL23_BURP6</name>